<sequence>MFAYIKGTVEEKNNDSIIVEAGGIGYRIFTALSTINNMGQNGTTVKIYTHYYVREDIAVLYGFGTVEELTMFEMLLTVSGVGPKAAISMISTLSPSRFYLAVVSQDTKSLTKAPGIGMKMAQRIILDLKDKISKEQLTSSIPMTSPENNEVTGDSVLSEAVSALMVLGYGSAEASSTISGIYEKGISVEELVKKALKSL</sequence>
<comment type="function">
    <text evidence="1">The RuvA-RuvB-RuvC complex processes Holliday junction (HJ) DNA during genetic recombination and DNA repair, while the RuvA-RuvB complex plays an important role in the rescue of blocked DNA replication forks via replication fork reversal (RFR). RuvA specifically binds to HJ cruciform DNA, conferring on it an open structure. The RuvB hexamer acts as an ATP-dependent pump, pulling dsDNA into and through the RuvAB complex. HJ branch migration allows RuvC to scan DNA until it finds its consensus sequence, where it cleaves and resolves the cruciform DNA.</text>
</comment>
<comment type="subunit">
    <text evidence="1">Homotetramer. Forms an RuvA(8)-RuvB(12)-Holliday junction (HJ) complex. HJ DNA is sandwiched between 2 RuvA tetramers; dsDNA enters through RuvA and exits via RuvB. An RuvB hexamer assembles on each DNA strand where it exits the tetramer. Each RuvB hexamer is contacted by two RuvA subunits (via domain III) on 2 adjacent RuvB subunits; this complex drives branch migration. In the full resolvosome a probable DNA-RuvA(4)-RuvB(12)-RuvC(2) complex forms which resolves the HJ.</text>
</comment>
<comment type="subcellular location">
    <subcellularLocation>
        <location evidence="1">Cytoplasm</location>
    </subcellularLocation>
</comment>
<comment type="domain">
    <text evidence="1">Has three domains with a flexible linker between the domains II and III and assumes an 'L' shape. Domain III is highly mobile and contacts RuvB.</text>
</comment>
<comment type="similarity">
    <text evidence="1">Belongs to the RuvA family.</text>
</comment>
<name>RUVA_RUMCH</name>
<reference key="1">
    <citation type="submission" date="2009-01" db="EMBL/GenBank/DDBJ databases">
        <title>Complete sequence of Clostridium cellulolyticum H10.</title>
        <authorList>
            <consortium name="US DOE Joint Genome Institute"/>
            <person name="Lucas S."/>
            <person name="Copeland A."/>
            <person name="Lapidus A."/>
            <person name="Glavina del Rio T."/>
            <person name="Dalin E."/>
            <person name="Tice H."/>
            <person name="Bruce D."/>
            <person name="Goodwin L."/>
            <person name="Pitluck S."/>
            <person name="Chertkov O."/>
            <person name="Saunders E."/>
            <person name="Brettin T."/>
            <person name="Detter J.C."/>
            <person name="Han C."/>
            <person name="Larimer F."/>
            <person name="Land M."/>
            <person name="Hauser L."/>
            <person name="Kyrpides N."/>
            <person name="Ivanova N."/>
            <person name="Zhou J."/>
            <person name="Richardson P."/>
        </authorList>
    </citation>
    <scope>NUCLEOTIDE SEQUENCE [LARGE SCALE GENOMIC DNA]</scope>
    <source>
        <strain>ATCC 35319 / DSM 5812 / JCM 6584 / H10</strain>
    </source>
</reference>
<feature type="chain" id="PRO_1000195130" description="Holliday junction branch migration complex subunit RuvA">
    <location>
        <begin position="1"/>
        <end position="199"/>
    </location>
</feature>
<feature type="region of interest" description="Domain I" evidence="1">
    <location>
        <begin position="1"/>
        <end position="64"/>
    </location>
</feature>
<feature type="region of interest" description="Domain II" evidence="1">
    <location>
        <begin position="65"/>
        <end position="143"/>
    </location>
</feature>
<feature type="region of interest" description="Flexible linker" evidence="1">
    <location>
        <begin position="144"/>
        <end position="151"/>
    </location>
</feature>
<feature type="region of interest" description="Domain III" evidence="1">
    <location>
        <begin position="152"/>
        <end position="199"/>
    </location>
</feature>
<protein>
    <recommendedName>
        <fullName evidence="1">Holliday junction branch migration complex subunit RuvA</fullName>
    </recommendedName>
</protein>
<gene>
    <name evidence="1" type="primary">ruvA</name>
    <name type="ordered locus">Ccel_1347</name>
</gene>
<keyword id="KW-0963">Cytoplasm</keyword>
<keyword id="KW-0227">DNA damage</keyword>
<keyword id="KW-0233">DNA recombination</keyword>
<keyword id="KW-0234">DNA repair</keyword>
<keyword id="KW-0238">DNA-binding</keyword>
<keyword id="KW-1185">Reference proteome</keyword>
<accession>B8I1A3</accession>
<organism>
    <name type="scientific">Ruminiclostridium cellulolyticum (strain ATCC 35319 / DSM 5812 / JCM 6584 / H10)</name>
    <name type="common">Clostridium cellulolyticum</name>
    <dbReference type="NCBI Taxonomy" id="394503"/>
    <lineage>
        <taxon>Bacteria</taxon>
        <taxon>Bacillati</taxon>
        <taxon>Bacillota</taxon>
        <taxon>Clostridia</taxon>
        <taxon>Eubacteriales</taxon>
        <taxon>Oscillospiraceae</taxon>
        <taxon>Ruminiclostridium</taxon>
    </lineage>
</organism>
<proteinExistence type="inferred from homology"/>
<dbReference type="EMBL" id="CP001348">
    <property type="protein sequence ID" value="ACL75701.1"/>
    <property type="molecule type" value="Genomic_DNA"/>
</dbReference>
<dbReference type="RefSeq" id="WP_015924849.1">
    <property type="nucleotide sequence ID" value="NC_011898.1"/>
</dbReference>
<dbReference type="SMR" id="B8I1A3"/>
<dbReference type="STRING" id="394503.Ccel_1347"/>
<dbReference type="KEGG" id="cce:Ccel_1347"/>
<dbReference type="eggNOG" id="COG0632">
    <property type="taxonomic scope" value="Bacteria"/>
</dbReference>
<dbReference type="HOGENOM" id="CLU_087936_3_0_9"/>
<dbReference type="OrthoDB" id="5293449at2"/>
<dbReference type="Proteomes" id="UP000001349">
    <property type="component" value="Chromosome"/>
</dbReference>
<dbReference type="GO" id="GO:0005737">
    <property type="term" value="C:cytoplasm"/>
    <property type="evidence" value="ECO:0007669"/>
    <property type="project" value="UniProtKB-SubCell"/>
</dbReference>
<dbReference type="GO" id="GO:0009379">
    <property type="term" value="C:Holliday junction helicase complex"/>
    <property type="evidence" value="ECO:0007669"/>
    <property type="project" value="InterPro"/>
</dbReference>
<dbReference type="GO" id="GO:0048476">
    <property type="term" value="C:Holliday junction resolvase complex"/>
    <property type="evidence" value="ECO:0007669"/>
    <property type="project" value="UniProtKB-UniRule"/>
</dbReference>
<dbReference type="GO" id="GO:0005524">
    <property type="term" value="F:ATP binding"/>
    <property type="evidence" value="ECO:0007669"/>
    <property type="project" value="InterPro"/>
</dbReference>
<dbReference type="GO" id="GO:0000400">
    <property type="term" value="F:four-way junction DNA binding"/>
    <property type="evidence" value="ECO:0007669"/>
    <property type="project" value="UniProtKB-UniRule"/>
</dbReference>
<dbReference type="GO" id="GO:0009378">
    <property type="term" value="F:four-way junction helicase activity"/>
    <property type="evidence" value="ECO:0007669"/>
    <property type="project" value="InterPro"/>
</dbReference>
<dbReference type="GO" id="GO:0006310">
    <property type="term" value="P:DNA recombination"/>
    <property type="evidence" value="ECO:0007669"/>
    <property type="project" value="UniProtKB-UniRule"/>
</dbReference>
<dbReference type="GO" id="GO:0006281">
    <property type="term" value="P:DNA repair"/>
    <property type="evidence" value="ECO:0007669"/>
    <property type="project" value="UniProtKB-UniRule"/>
</dbReference>
<dbReference type="CDD" id="cd14332">
    <property type="entry name" value="UBA_RuvA_C"/>
    <property type="match status" value="1"/>
</dbReference>
<dbReference type="Gene3D" id="1.10.150.20">
    <property type="entry name" value="5' to 3' exonuclease, C-terminal subdomain"/>
    <property type="match status" value="1"/>
</dbReference>
<dbReference type="Gene3D" id="1.10.8.10">
    <property type="entry name" value="DNA helicase RuvA subunit, C-terminal domain"/>
    <property type="match status" value="1"/>
</dbReference>
<dbReference type="Gene3D" id="2.40.50.140">
    <property type="entry name" value="Nucleic acid-binding proteins"/>
    <property type="match status" value="1"/>
</dbReference>
<dbReference type="HAMAP" id="MF_00031">
    <property type="entry name" value="DNA_HJ_migration_RuvA"/>
    <property type="match status" value="1"/>
</dbReference>
<dbReference type="InterPro" id="IPR013849">
    <property type="entry name" value="DNA_helicase_Holl-junc_RuvA_I"/>
</dbReference>
<dbReference type="InterPro" id="IPR003583">
    <property type="entry name" value="Hlx-hairpin-Hlx_DNA-bd_motif"/>
</dbReference>
<dbReference type="InterPro" id="IPR012340">
    <property type="entry name" value="NA-bd_OB-fold"/>
</dbReference>
<dbReference type="InterPro" id="IPR000085">
    <property type="entry name" value="RuvA"/>
</dbReference>
<dbReference type="InterPro" id="IPR010994">
    <property type="entry name" value="RuvA_2-like"/>
</dbReference>
<dbReference type="InterPro" id="IPR011114">
    <property type="entry name" value="RuvA_C"/>
</dbReference>
<dbReference type="InterPro" id="IPR036267">
    <property type="entry name" value="RuvA_C_sf"/>
</dbReference>
<dbReference type="NCBIfam" id="TIGR00084">
    <property type="entry name" value="ruvA"/>
    <property type="match status" value="1"/>
</dbReference>
<dbReference type="Pfam" id="PF14520">
    <property type="entry name" value="HHH_5"/>
    <property type="match status" value="1"/>
</dbReference>
<dbReference type="Pfam" id="PF07499">
    <property type="entry name" value="RuvA_C"/>
    <property type="match status" value="1"/>
</dbReference>
<dbReference type="Pfam" id="PF01330">
    <property type="entry name" value="RuvA_N"/>
    <property type="match status" value="1"/>
</dbReference>
<dbReference type="SMART" id="SM00278">
    <property type="entry name" value="HhH1"/>
    <property type="match status" value="2"/>
</dbReference>
<dbReference type="SUPFAM" id="SSF46929">
    <property type="entry name" value="DNA helicase RuvA subunit, C-terminal domain"/>
    <property type="match status" value="1"/>
</dbReference>
<dbReference type="SUPFAM" id="SSF50249">
    <property type="entry name" value="Nucleic acid-binding proteins"/>
    <property type="match status" value="1"/>
</dbReference>
<dbReference type="SUPFAM" id="SSF47781">
    <property type="entry name" value="RuvA domain 2-like"/>
    <property type="match status" value="1"/>
</dbReference>
<evidence type="ECO:0000255" key="1">
    <source>
        <dbReference type="HAMAP-Rule" id="MF_00031"/>
    </source>
</evidence>